<reference key="1">
    <citation type="submission" date="2000-01" db="EMBL/GenBank/DDBJ databases">
        <authorList>
            <person name="Hsu T.-J."/>
            <person name="Morita H."/>
            <person name="Shiokawa K."/>
            <person name="Noguchi H."/>
        </authorList>
    </citation>
    <scope>NUCLEOTIDE SEQUENCE [MRNA]</scope>
</reference>
<comment type="function">
    <text>The primary product of this enzyme is 4,2',4',6'-tetrahydroxychalcone (also termed naringenin-chalcone or chalcone) which can under specific conditions spontaneously isomerize into naringenin.</text>
</comment>
<comment type="catalytic activity">
    <reaction evidence="1">
        <text>(E)-4-coumaroyl-CoA + 3 malonyl-CoA + 3 H(+) = 2',4,4',6'-tetrahydroxychalcone + 3 CO2 + 4 CoA</text>
        <dbReference type="Rhea" id="RHEA:11128"/>
        <dbReference type="ChEBI" id="CHEBI:15378"/>
        <dbReference type="ChEBI" id="CHEBI:15413"/>
        <dbReference type="ChEBI" id="CHEBI:16526"/>
        <dbReference type="ChEBI" id="CHEBI:57287"/>
        <dbReference type="ChEBI" id="CHEBI:57384"/>
        <dbReference type="ChEBI" id="CHEBI:85008"/>
        <dbReference type="EC" id="2.3.1.74"/>
    </reaction>
</comment>
<comment type="pathway">
    <text>Secondary metabolite biosynthesis; flavonoid biosynthesis.</text>
</comment>
<comment type="similarity">
    <text evidence="2">Belongs to the thiolase-like superfamily. Chalcone/stilbene synthases family.</text>
</comment>
<sequence>MVTVEEVRKAQRAEGPATILAIGTVTPANCVNQSTYPDYYFRITNSEHKTELKEKFQRMCDKSMITKRYMHLTEEILKENPSFCEYMAPSLDARQDIAVVEVPKLGKEAAQSAIKEWGQPKSKITHVVFCTTSGIDMPGADYQLTKLLGLRPSVKRLMMYQQGCFAGGTVLRLAKDLAENNKGARVLIVCSEITVVTFRGPSETHLDSLVGQALFGDGAAAVIVGADPTPAEKPLFQLVSAAQTLAPNSCGAIDGHLREVGLTFHLLKDVPSVVSNNIEKCLFEAFNPLGISDWNSVFWIAHPGGPAILDQVEDKLGLKPEKLRATRHVLSEYGNMSSACVLFILDEMRKASSNAGLGTTGEGLEWGVLFGFGPGLTIETVVLHSVPT</sequence>
<name>CHS8_IPOBA</name>
<protein>
    <recommendedName>
        <fullName>Chalcone synthase DIV</fullName>
        <ecNumber>2.3.1.74</ecNumber>
    </recommendedName>
    <alternativeName>
        <fullName>Naringenin-chalcone synthase DIV</fullName>
    </alternativeName>
</protein>
<gene>
    <name type="primary">CHS-DIV</name>
</gene>
<proteinExistence type="evidence at transcript level"/>
<accession>Q9MB36</accession>
<organism>
    <name type="scientific">Ipomoea batatas</name>
    <name type="common">Sweet potato</name>
    <name type="synonym">Convolvulus batatas</name>
    <dbReference type="NCBI Taxonomy" id="4120"/>
    <lineage>
        <taxon>Eukaryota</taxon>
        <taxon>Viridiplantae</taxon>
        <taxon>Streptophyta</taxon>
        <taxon>Embryophyta</taxon>
        <taxon>Tracheophyta</taxon>
        <taxon>Spermatophyta</taxon>
        <taxon>Magnoliopsida</taxon>
        <taxon>eudicotyledons</taxon>
        <taxon>Gunneridae</taxon>
        <taxon>Pentapetalae</taxon>
        <taxon>asterids</taxon>
        <taxon>lamiids</taxon>
        <taxon>Solanales</taxon>
        <taxon>Convolvulaceae</taxon>
        <taxon>Ipomoeeae</taxon>
        <taxon>Ipomoea</taxon>
    </lineage>
</organism>
<evidence type="ECO:0000255" key="1">
    <source>
        <dbReference type="PROSITE-ProRule" id="PRU10023"/>
    </source>
</evidence>
<evidence type="ECO:0000305" key="2"/>
<keyword id="KW-0012">Acyltransferase</keyword>
<keyword id="KW-0284">Flavonoid biosynthesis</keyword>
<keyword id="KW-0808">Transferase</keyword>
<dbReference type="EC" id="2.3.1.74"/>
<dbReference type="EMBL" id="AB037393">
    <property type="protein sequence ID" value="BAA90332.1"/>
    <property type="molecule type" value="mRNA"/>
</dbReference>
<dbReference type="SMR" id="Q9MB36"/>
<dbReference type="UniPathway" id="UPA00154"/>
<dbReference type="GO" id="GO:0016210">
    <property type="term" value="F:naringenin-chalcone synthase activity"/>
    <property type="evidence" value="ECO:0007669"/>
    <property type="project" value="UniProtKB-EC"/>
</dbReference>
<dbReference type="GO" id="GO:0009813">
    <property type="term" value="P:flavonoid biosynthetic process"/>
    <property type="evidence" value="ECO:0007669"/>
    <property type="project" value="UniProtKB-UniPathway"/>
</dbReference>
<dbReference type="GO" id="GO:0030639">
    <property type="term" value="P:polyketide biosynthetic process"/>
    <property type="evidence" value="ECO:0007669"/>
    <property type="project" value="TreeGrafter"/>
</dbReference>
<dbReference type="CDD" id="cd00831">
    <property type="entry name" value="CHS_like"/>
    <property type="match status" value="1"/>
</dbReference>
<dbReference type="FunFam" id="3.40.47.10:FF:000014">
    <property type="entry name" value="Chalcone synthase 1"/>
    <property type="match status" value="1"/>
</dbReference>
<dbReference type="FunFam" id="3.40.47.10:FF:000025">
    <property type="entry name" value="Chalcone synthase 2"/>
    <property type="match status" value="1"/>
</dbReference>
<dbReference type="Gene3D" id="3.40.47.10">
    <property type="match status" value="2"/>
</dbReference>
<dbReference type="InterPro" id="IPR012328">
    <property type="entry name" value="Chalcone/stilbene_synt_C"/>
</dbReference>
<dbReference type="InterPro" id="IPR001099">
    <property type="entry name" value="Chalcone/stilbene_synt_N"/>
</dbReference>
<dbReference type="InterPro" id="IPR018088">
    <property type="entry name" value="Chalcone/stilbene_synthase_AS"/>
</dbReference>
<dbReference type="InterPro" id="IPR011141">
    <property type="entry name" value="Polyketide_synthase_type-III"/>
</dbReference>
<dbReference type="InterPro" id="IPR016039">
    <property type="entry name" value="Thiolase-like"/>
</dbReference>
<dbReference type="PANTHER" id="PTHR11877:SF80">
    <property type="entry name" value="CHALCONE SYNTHASE 1"/>
    <property type="match status" value="1"/>
</dbReference>
<dbReference type="PANTHER" id="PTHR11877">
    <property type="entry name" value="HYDROXYMETHYLGLUTARYL-COA SYNTHASE"/>
    <property type="match status" value="1"/>
</dbReference>
<dbReference type="Pfam" id="PF02797">
    <property type="entry name" value="Chal_sti_synt_C"/>
    <property type="match status" value="1"/>
</dbReference>
<dbReference type="Pfam" id="PF00195">
    <property type="entry name" value="Chal_sti_synt_N"/>
    <property type="match status" value="1"/>
</dbReference>
<dbReference type="PIRSF" id="PIRSF000451">
    <property type="entry name" value="PKS_III"/>
    <property type="match status" value="1"/>
</dbReference>
<dbReference type="SUPFAM" id="SSF53901">
    <property type="entry name" value="Thiolase-like"/>
    <property type="match status" value="2"/>
</dbReference>
<dbReference type="PROSITE" id="PS00441">
    <property type="entry name" value="CHALCONE_SYNTH"/>
    <property type="match status" value="1"/>
</dbReference>
<feature type="chain" id="PRO_0000215989" description="Chalcone synthase DIV">
    <location>
        <begin position="1"/>
        <end position="388"/>
    </location>
</feature>
<feature type="active site" evidence="1">
    <location>
        <position position="164"/>
    </location>
</feature>